<protein>
    <recommendedName>
        <fullName evidence="1">tRNA N6-adenosine threonylcarbamoyltransferase</fullName>
        <ecNumber evidence="1">2.3.1.234</ecNumber>
    </recommendedName>
    <alternativeName>
        <fullName evidence="1">N6-L-threonylcarbamoyladenine synthase</fullName>
        <shortName evidence="1">t(6)A synthase</shortName>
    </alternativeName>
    <alternativeName>
        <fullName evidence="1">t(6)A37 threonylcarbamoyladenosine biosynthesis protein TsaD</fullName>
    </alternativeName>
    <alternativeName>
        <fullName evidence="1">tRNA threonylcarbamoyladenosine biosynthesis protein TsaD</fullName>
    </alternativeName>
</protein>
<reference key="1">
    <citation type="submission" date="2007-11" db="EMBL/GenBank/DDBJ databases">
        <title>The genome sequence of the hyperthermophilic bacterium Thermotoga neapolitana.</title>
        <authorList>
            <person name="Lim S.K."/>
            <person name="Kim J.S."/>
            <person name="Cha S.H."/>
            <person name="Park B.C."/>
            <person name="Lee D.S."/>
            <person name="Tae H.S."/>
            <person name="Kim S.-J."/>
            <person name="Kim J.J."/>
            <person name="Park K.J."/>
            <person name="Lee S.Y."/>
        </authorList>
    </citation>
    <scope>NUCLEOTIDE SEQUENCE [LARGE SCALE GENOMIC DNA]</scope>
    <source>
        <strain>ATCC 49049 / DSM 4359 / NBRC 107923 / NS-E</strain>
    </source>
</reference>
<evidence type="ECO:0000255" key="1">
    <source>
        <dbReference type="HAMAP-Rule" id="MF_01445"/>
    </source>
</evidence>
<name>TSAD_THENN</name>
<proteinExistence type="inferred from homology"/>
<accession>B9K6Y6</accession>
<gene>
    <name evidence="1" type="primary">tsaD</name>
    <name type="synonym">gcp</name>
    <name type="ordered locus">CTN_0543</name>
</gene>
<comment type="function">
    <text evidence="1">Required for the formation of a threonylcarbamoyl group on adenosine at position 37 (t(6)A37) in tRNAs that read codons beginning with adenine. Is involved in the transfer of the threonylcarbamoyl moiety of threonylcarbamoyl-AMP (TC-AMP) to the N6 group of A37, together with TsaE and TsaB. TsaD likely plays a direct catalytic role in this reaction.</text>
</comment>
<comment type="catalytic activity">
    <reaction evidence="1">
        <text>L-threonylcarbamoyladenylate + adenosine(37) in tRNA = N(6)-L-threonylcarbamoyladenosine(37) in tRNA + AMP + H(+)</text>
        <dbReference type="Rhea" id="RHEA:37059"/>
        <dbReference type="Rhea" id="RHEA-COMP:10162"/>
        <dbReference type="Rhea" id="RHEA-COMP:10163"/>
        <dbReference type="ChEBI" id="CHEBI:15378"/>
        <dbReference type="ChEBI" id="CHEBI:73682"/>
        <dbReference type="ChEBI" id="CHEBI:74411"/>
        <dbReference type="ChEBI" id="CHEBI:74418"/>
        <dbReference type="ChEBI" id="CHEBI:456215"/>
        <dbReference type="EC" id="2.3.1.234"/>
    </reaction>
</comment>
<comment type="cofactor">
    <cofactor evidence="1">
        <name>Fe(2+)</name>
        <dbReference type="ChEBI" id="CHEBI:29033"/>
    </cofactor>
    <text evidence="1">Binds 1 Fe(2+) ion per subunit.</text>
</comment>
<comment type="subcellular location">
    <subcellularLocation>
        <location evidence="1">Cytoplasm</location>
    </subcellularLocation>
</comment>
<comment type="similarity">
    <text evidence="1">Belongs to the KAE1 / TsaD family.</text>
</comment>
<sequence>MRVLGIETSCDETAVAVLDDGKDVIVNFTVSQVEVHRKFGGVVPEVAARHHLKNLPFLLKETFKKVDPQTVDVVAATYGPGLVGALLVGLSAAKGLSISLKRPFVGVNHIEAHVHAVFLANPTLTPPFVVLMVSGGHTQLMKVNEDYSMEILGRTLDDSAGEAFDKVARLLGLGYPGGPIIDEVAKKGDPKKYSFPRPMMDEPNYNFSFAGLKTAVLYFLKKEKDYRVEDVAASFQEAVVDILVEKTFRLARNLGIRKIAFVGGVAANSRLREKVNDRAKRWGYEVFFPPLSLCTDNALMVARAGYEKAKRGIFFPLYLNADPNLSV</sequence>
<dbReference type="EC" id="2.3.1.234" evidence="1"/>
<dbReference type="EMBL" id="CP000916">
    <property type="protein sequence ID" value="ACM22719.1"/>
    <property type="molecule type" value="Genomic_DNA"/>
</dbReference>
<dbReference type="RefSeq" id="WP_015919038.1">
    <property type="nucleotide sequence ID" value="NC_011978.1"/>
</dbReference>
<dbReference type="SMR" id="B9K6Y6"/>
<dbReference type="STRING" id="309803.CTN_0543"/>
<dbReference type="KEGG" id="tna:CTN_0543"/>
<dbReference type="eggNOG" id="COG0533">
    <property type="taxonomic scope" value="Bacteria"/>
</dbReference>
<dbReference type="HOGENOM" id="CLU_023208_0_2_0"/>
<dbReference type="Proteomes" id="UP000000445">
    <property type="component" value="Chromosome"/>
</dbReference>
<dbReference type="GO" id="GO:0005737">
    <property type="term" value="C:cytoplasm"/>
    <property type="evidence" value="ECO:0007669"/>
    <property type="project" value="UniProtKB-SubCell"/>
</dbReference>
<dbReference type="GO" id="GO:0005506">
    <property type="term" value="F:iron ion binding"/>
    <property type="evidence" value="ECO:0007669"/>
    <property type="project" value="UniProtKB-UniRule"/>
</dbReference>
<dbReference type="GO" id="GO:0061711">
    <property type="term" value="F:N(6)-L-threonylcarbamoyladenine synthase activity"/>
    <property type="evidence" value="ECO:0007669"/>
    <property type="project" value="UniProtKB-EC"/>
</dbReference>
<dbReference type="GO" id="GO:0002949">
    <property type="term" value="P:tRNA threonylcarbamoyladenosine modification"/>
    <property type="evidence" value="ECO:0007669"/>
    <property type="project" value="UniProtKB-UniRule"/>
</dbReference>
<dbReference type="CDD" id="cd24133">
    <property type="entry name" value="ASKHA_NBD_TsaD_bac"/>
    <property type="match status" value="1"/>
</dbReference>
<dbReference type="FunFam" id="3.30.420.40:FF:000012">
    <property type="entry name" value="tRNA N6-adenosine threonylcarbamoyltransferase"/>
    <property type="match status" value="1"/>
</dbReference>
<dbReference type="FunFam" id="3.30.420.40:FF:000040">
    <property type="entry name" value="tRNA N6-adenosine threonylcarbamoyltransferase"/>
    <property type="match status" value="1"/>
</dbReference>
<dbReference type="Gene3D" id="3.30.420.40">
    <property type="match status" value="2"/>
</dbReference>
<dbReference type="HAMAP" id="MF_01445">
    <property type="entry name" value="TsaD"/>
    <property type="match status" value="1"/>
</dbReference>
<dbReference type="InterPro" id="IPR043129">
    <property type="entry name" value="ATPase_NBD"/>
</dbReference>
<dbReference type="InterPro" id="IPR000905">
    <property type="entry name" value="Gcp-like_dom"/>
</dbReference>
<dbReference type="InterPro" id="IPR017861">
    <property type="entry name" value="KAE1/TsaD"/>
</dbReference>
<dbReference type="InterPro" id="IPR017860">
    <property type="entry name" value="Peptidase_M22_CS"/>
</dbReference>
<dbReference type="InterPro" id="IPR022450">
    <property type="entry name" value="TsaD"/>
</dbReference>
<dbReference type="NCBIfam" id="TIGR00329">
    <property type="entry name" value="gcp_kae1"/>
    <property type="match status" value="1"/>
</dbReference>
<dbReference type="NCBIfam" id="TIGR03723">
    <property type="entry name" value="T6A_TsaD_YgjD"/>
    <property type="match status" value="1"/>
</dbReference>
<dbReference type="PANTHER" id="PTHR11735">
    <property type="entry name" value="TRNA N6-ADENOSINE THREONYLCARBAMOYLTRANSFERASE"/>
    <property type="match status" value="1"/>
</dbReference>
<dbReference type="PANTHER" id="PTHR11735:SF6">
    <property type="entry name" value="TRNA N6-ADENOSINE THREONYLCARBAMOYLTRANSFERASE, MITOCHONDRIAL"/>
    <property type="match status" value="1"/>
</dbReference>
<dbReference type="Pfam" id="PF00814">
    <property type="entry name" value="TsaD"/>
    <property type="match status" value="1"/>
</dbReference>
<dbReference type="PRINTS" id="PR00789">
    <property type="entry name" value="OSIALOPTASE"/>
</dbReference>
<dbReference type="SUPFAM" id="SSF53067">
    <property type="entry name" value="Actin-like ATPase domain"/>
    <property type="match status" value="2"/>
</dbReference>
<dbReference type="PROSITE" id="PS01016">
    <property type="entry name" value="GLYCOPROTEASE"/>
    <property type="match status" value="1"/>
</dbReference>
<organism>
    <name type="scientific">Thermotoga neapolitana (strain ATCC 49049 / DSM 4359 / NBRC 107923 / NS-E)</name>
    <dbReference type="NCBI Taxonomy" id="309803"/>
    <lineage>
        <taxon>Bacteria</taxon>
        <taxon>Thermotogati</taxon>
        <taxon>Thermotogota</taxon>
        <taxon>Thermotogae</taxon>
        <taxon>Thermotogales</taxon>
        <taxon>Thermotogaceae</taxon>
        <taxon>Thermotoga</taxon>
    </lineage>
</organism>
<feature type="chain" id="PRO_1000184988" description="tRNA N6-adenosine threonylcarbamoyltransferase">
    <location>
        <begin position="1"/>
        <end position="327"/>
    </location>
</feature>
<feature type="binding site" evidence="1">
    <location>
        <position position="109"/>
    </location>
    <ligand>
        <name>Fe cation</name>
        <dbReference type="ChEBI" id="CHEBI:24875"/>
    </ligand>
</feature>
<feature type="binding site" evidence="1">
    <location>
        <position position="113"/>
    </location>
    <ligand>
        <name>Fe cation</name>
        <dbReference type="ChEBI" id="CHEBI:24875"/>
    </ligand>
</feature>
<feature type="binding site" evidence="1">
    <location>
        <begin position="132"/>
        <end position="136"/>
    </location>
    <ligand>
        <name>substrate</name>
    </ligand>
</feature>
<feature type="binding site" evidence="1">
    <location>
        <position position="165"/>
    </location>
    <ligand>
        <name>substrate</name>
    </ligand>
</feature>
<feature type="binding site" evidence="1">
    <location>
        <position position="178"/>
    </location>
    <ligand>
        <name>substrate</name>
    </ligand>
</feature>
<feature type="binding site" evidence="1">
    <location>
        <position position="182"/>
    </location>
    <ligand>
        <name>substrate</name>
    </ligand>
</feature>
<feature type="binding site" evidence="1">
    <location>
        <position position="268"/>
    </location>
    <ligand>
        <name>substrate</name>
    </ligand>
</feature>
<feature type="binding site" evidence="1">
    <location>
        <position position="296"/>
    </location>
    <ligand>
        <name>Fe cation</name>
        <dbReference type="ChEBI" id="CHEBI:24875"/>
    </ligand>
</feature>
<keyword id="KW-0012">Acyltransferase</keyword>
<keyword id="KW-0963">Cytoplasm</keyword>
<keyword id="KW-0408">Iron</keyword>
<keyword id="KW-0479">Metal-binding</keyword>
<keyword id="KW-0808">Transferase</keyword>
<keyword id="KW-0819">tRNA processing</keyword>